<feature type="signal peptide" evidence="3">
    <location>
        <begin position="1"/>
        <end position="27"/>
    </location>
</feature>
<feature type="chain" id="PRO_0000015617" description="Cardiotrophin-like cytokine factor 1">
    <location>
        <begin position="28"/>
        <end position="225"/>
    </location>
</feature>
<feature type="glycosylation site" description="N-linked (GlcNAc...) asparagine" evidence="3">
    <location>
        <position position="29"/>
    </location>
</feature>
<keyword id="KW-0202">Cytokine</keyword>
<keyword id="KW-0325">Glycoprotein</keyword>
<keyword id="KW-1185">Reference proteome</keyword>
<keyword id="KW-0964">Secreted</keyword>
<keyword id="KW-0732">Signal</keyword>
<protein>
    <recommendedName>
        <fullName>Cardiotrophin-like cytokine factor 1</fullName>
    </recommendedName>
    <alternativeName>
        <fullName>B-cell-stimulating factor 3</fullName>
        <shortName>BSF-3</shortName>
    </alternativeName>
    <alternativeName>
        <fullName>Novel neurotrophin-1</fullName>
        <shortName>NNT-1</shortName>
    </alternativeName>
</protein>
<sequence>MDLRAGDSWGMLACLCTVLWHLPAVPALNRTGDPGPGPSIQKTYDLTRYLEHQLRSLAGTYLNYLGPPFNEPDFNPPRLGAETLPRATVNLEVWRSLNDRLRLTQNYEAYSHLLCYLRGLNRQAATAELRRSLAHFCTSLQGLLGSIAGVMATLGYPLPQPLPGTEPAWAPGPAHSDFLQKMDDFWLLKELQTWLWRSAKDFNRLKKKMQPPAASVTLHLEAHGF</sequence>
<name>CLCF1_MOUSE</name>
<gene>
    <name type="primary">Clcf1</name>
    <name type="synonym">Bsf3</name>
    <name type="synonym">Nnt1</name>
</gene>
<evidence type="ECO:0000250" key="1"/>
<evidence type="ECO:0000250" key="2">
    <source>
        <dbReference type="UniProtKB" id="Q9UBD9"/>
    </source>
</evidence>
<evidence type="ECO:0000255" key="3"/>
<evidence type="ECO:0000269" key="4">
    <source>
    </source>
</evidence>
<evidence type="ECO:0000305" key="5"/>
<accession>Q9QZM3</accession>
<accession>Q3SXK2</accession>
<dbReference type="EMBL" id="AF176913">
    <property type="protein sequence ID" value="AAF00993.1"/>
    <property type="molecule type" value="mRNA"/>
</dbReference>
<dbReference type="EMBL" id="BC104258">
    <property type="protein sequence ID" value="AAI04259.1"/>
    <property type="molecule type" value="mRNA"/>
</dbReference>
<dbReference type="EMBL" id="BC104259">
    <property type="protein sequence ID" value="AAI04260.1"/>
    <property type="molecule type" value="mRNA"/>
</dbReference>
<dbReference type="EMBL" id="CH466612">
    <property type="protein sequence ID" value="EDL33037.1"/>
    <property type="molecule type" value="Genomic_DNA"/>
</dbReference>
<dbReference type="CCDS" id="CCDS29423.1"/>
<dbReference type="RefSeq" id="NP_001296967.1">
    <property type="nucleotide sequence ID" value="NM_001310038.2"/>
</dbReference>
<dbReference type="RefSeq" id="NP_001296968.1">
    <property type="nucleotide sequence ID" value="NM_001310039.1"/>
</dbReference>
<dbReference type="RefSeq" id="NP_064336.1">
    <property type="nucleotide sequence ID" value="NM_019952.6"/>
</dbReference>
<dbReference type="SMR" id="Q9QZM3"/>
<dbReference type="BioGRID" id="208136">
    <property type="interactions" value="2"/>
</dbReference>
<dbReference type="FunCoup" id="Q9QZM3">
    <property type="interactions" value="422"/>
</dbReference>
<dbReference type="IntAct" id="Q9QZM3">
    <property type="interactions" value="2"/>
</dbReference>
<dbReference type="STRING" id="10090.ENSMUSP00000045562"/>
<dbReference type="ChEMBL" id="CHEMBL2176788"/>
<dbReference type="GlyCosmos" id="Q9QZM3">
    <property type="glycosylation" value="1 site, No reported glycans"/>
</dbReference>
<dbReference type="GlyGen" id="Q9QZM3">
    <property type="glycosylation" value="1 site"/>
</dbReference>
<dbReference type="PhosphoSitePlus" id="Q9QZM3"/>
<dbReference type="PaxDb" id="10090-ENSMUSP00000045562"/>
<dbReference type="Antibodypedia" id="44555">
    <property type="antibodies" value="247 antibodies from 26 providers"/>
</dbReference>
<dbReference type="DNASU" id="56708"/>
<dbReference type="Ensembl" id="ENSMUST00000046506.7">
    <property type="protein sequence ID" value="ENSMUSP00000045562.7"/>
    <property type="gene ID" value="ENSMUSG00000040663.10"/>
</dbReference>
<dbReference type="GeneID" id="56708"/>
<dbReference type="KEGG" id="mmu:56708"/>
<dbReference type="UCSC" id="uc008fzj.1">
    <property type="organism name" value="mouse"/>
</dbReference>
<dbReference type="AGR" id="MGI:1930088"/>
<dbReference type="CTD" id="23529"/>
<dbReference type="MGI" id="MGI:1930088">
    <property type="gene designation" value="Clcf1"/>
</dbReference>
<dbReference type="VEuPathDB" id="HostDB:ENSMUSG00000040663"/>
<dbReference type="eggNOG" id="ENOG502QUIA">
    <property type="taxonomic scope" value="Eukaryota"/>
</dbReference>
<dbReference type="GeneTree" id="ENSGT00510000048856"/>
<dbReference type="HOGENOM" id="CLU_079382_0_0_1"/>
<dbReference type="InParanoid" id="Q9QZM3"/>
<dbReference type="OMA" id="WRSLNDN"/>
<dbReference type="OrthoDB" id="8956155at2759"/>
<dbReference type="PhylomeDB" id="Q9QZM3"/>
<dbReference type="TreeFam" id="TF333266"/>
<dbReference type="Reactome" id="R-MMU-6788467">
    <property type="pathway name" value="IL-6-type cytokine receptor ligand interactions"/>
</dbReference>
<dbReference type="BioGRID-ORCS" id="56708">
    <property type="hits" value="2 hits in 115 CRISPR screens"/>
</dbReference>
<dbReference type="PRO" id="PR:Q9QZM3"/>
<dbReference type="Proteomes" id="UP000000589">
    <property type="component" value="Chromosome 19"/>
</dbReference>
<dbReference type="RNAct" id="Q9QZM3">
    <property type="molecule type" value="protein"/>
</dbReference>
<dbReference type="Bgee" id="ENSMUSG00000040663">
    <property type="expression patterns" value="Expressed in spleen and 71 other cell types or tissues"/>
</dbReference>
<dbReference type="ExpressionAtlas" id="Q9QZM3">
    <property type="expression patterns" value="baseline and differential"/>
</dbReference>
<dbReference type="GO" id="GO:0097059">
    <property type="term" value="C:CNTFR-CLCF1 complex"/>
    <property type="evidence" value="ECO:0007669"/>
    <property type="project" value="Ensembl"/>
</dbReference>
<dbReference type="GO" id="GO:0097058">
    <property type="term" value="C:CRLF-CLCF1 complex"/>
    <property type="evidence" value="ECO:0000250"/>
    <property type="project" value="BHF-UCL"/>
</dbReference>
<dbReference type="GO" id="GO:0005576">
    <property type="term" value="C:extracellular region"/>
    <property type="evidence" value="ECO:0000250"/>
    <property type="project" value="BHF-UCL"/>
</dbReference>
<dbReference type="GO" id="GO:0005615">
    <property type="term" value="C:extracellular space"/>
    <property type="evidence" value="ECO:0007669"/>
    <property type="project" value="UniProtKB-KW"/>
</dbReference>
<dbReference type="GO" id="GO:0005127">
    <property type="term" value="F:ciliary neurotrophic factor receptor binding"/>
    <property type="evidence" value="ECO:0007669"/>
    <property type="project" value="Ensembl"/>
</dbReference>
<dbReference type="GO" id="GO:0005125">
    <property type="term" value="F:cytokine activity"/>
    <property type="evidence" value="ECO:0000314"/>
    <property type="project" value="MGI"/>
</dbReference>
<dbReference type="GO" id="GO:0005102">
    <property type="term" value="F:signaling receptor binding"/>
    <property type="evidence" value="ECO:0000250"/>
    <property type="project" value="UniProtKB"/>
</dbReference>
<dbReference type="GO" id="GO:0030183">
    <property type="term" value="P:B cell differentiation"/>
    <property type="evidence" value="ECO:0000314"/>
    <property type="project" value="MGI"/>
</dbReference>
<dbReference type="GO" id="GO:0007166">
    <property type="term" value="P:cell surface receptor signaling pathway"/>
    <property type="evidence" value="ECO:0000314"/>
    <property type="project" value="MGI"/>
</dbReference>
<dbReference type="GO" id="GO:0007259">
    <property type="term" value="P:cell surface receptor signaling pathway via JAK-STAT"/>
    <property type="evidence" value="ECO:0000314"/>
    <property type="project" value="MGI"/>
</dbReference>
<dbReference type="GO" id="GO:0097696">
    <property type="term" value="P:cell surface receptor signaling pathway via STAT"/>
    <property type="evidence" value="ECO:0000314"/>
    <property type="project" value="BHF-UCL"/>
</dbReference>
<dbReference type="GO" id="GO:2000672">
    <property type="term" value="P:negative regulation of motor neuron apoptotic process"/>
    <property type="evidence" value="ECO:0000303"/>
    <property type="project" value="BHF-UCL"/>
</dbReference>
<dbReference type="GO" id="GO:0043524">
    <property type="term" value="P:negative regulation of neuron apoptotic process"/>
    <property type="evidence" value="ECO:0000250"/>
    <property type="project" value="BHF-UCL"/>
</dbReference>
<dbReference type="GO" id="GO:0048711">
    <property type="term" value="P:positive regulation of astrocyte differentiation"/>
    <property type="evidence" value="ECO:0000314"/>
    <property type="project" value="BHF-UCL"/>
</dbReference>
<dbReference type="GO" id="GO:0030890">
    <property type="term" value="P:positive regulation of B cell proliferation"/>
    <property type="evidence" value="ECO:0000314"/>
    <property type="project" value="BHF-UCL"/>
</dbReference>
<dbReference type="GO" id="GO:0008284">
    <property type="term" value="P:positive regulation of cell population proliferation"/>
    <property type="evidence" value="ECO:0000250"/>
    <property type="project" value="BHF-UCL"/>
</dbReference>
<dbReference type="GO" id="GO:0051466">
    <property type="term" value="P:positive regulation of corticotropin-releasing hormone secretion"/>
    <property type="evidence" value="ECO:0000304"/>
    <property type="project" value="BHF-UCL"/>
</dbReference>
<dbReference type="GO" id="GO:0002639">
    <property type="term" value="P:positive regulation of immunoglobulin production"/>
    <property type="evidence" value="ECO:0000314"/>
    <property type="project" value="BHF-UCL"/>
</dbReference>
<dbReference type="GO" id="GO:0048295">
    <property type="term" value="P:positive regulation of isotype switching to IgE isotypes"/>
    <property type="evidence" value="ECO:0000314"/>
    <property type="project" value="BHF-UCL"/>
</dbReference>
<dbReference type="GO" id="GO:0002830">
    <property type="term" value="P:positive regulation of type 2 immune response"/>
    <property type="evidence" value="ECO:0000303"/>
    <property type="project" value="BHF-UCL"/>
</dbReference>
<dbReference type="GO" id="GO:0070372">
    <property type="term" value="P:regulation of ERK1 and ERK2 cascade"/>
    <property type="evidence" value="ECO:0000304"/>
    <property type="project" value="BHF-UCL"/>
</dbReference>
<dbReference type="GO" id="GO:0050727">
    <property type="term" value="P:regulation of inflammatory response"/>
    <property type="evidence" value="ECO:0000303"/>
    <property type="project" value="BHF-UCL"/>
</dbReference>
<dbReference type="GO" id="GO:0051896">
    <property type="term" value="P:regulation of phosphatidylinositol 3-kinase/protein kinase B signal transduction"/>
    <property type="evidence" value="ECO:0000304"/>
    <property type="project" value="BHF-UCL"/>
</dbReference>
<dbReference type="FunFam" id="1.20.1250.10:FF:000005">
    <property type="entry name" value="cardiotrophin-like cytokine factor 1"/>
    <property type="match status" value="1"/>
</dbReference>
<dbReference type="Gene3D" id="1.20.1250.10">
    <property type="match status" value="1"/>
</dbReference>
<dbReference type="InterPro" id="IPR009079">
    <property type="entry name" value="4_helix_cytokine-like_core"/>
</dbReference>
<dbReference type="InterPro" id="IPR010681">
    <property type="entry name" value="PRF/CT"/>
</dbReference>
<dbReference type="PANTHER" id="PTHR21353">
    <property type="match status" value="1"/>
</dbReference>
<dbReference type="PANTHER" id="PTHR21353:SF7">
    <property type="entry name" value="CARDIOTROPHIN-LIKE CYTOKINE FACTOR 1"/>
    <property type="match status" value="1"/>
</dbReference>
<dbReference type="Pfam" id="PF06875">
    <property type="entry name" value="PRF"/>
    <property type="match status" value="1"/>
</dbReference>
<dbReference type="SUPFAM" id="SSF47266">
    <property type="entry name" value="4-helical cytokines"/>
    <property type="match status" value="1"/>
</dbReference>
<comment type="function">
    <text evidence="2 4">In complex with CRLF1, forms a heterodimeric neurotropic cytokine that plays a crucial role during neuronal development (By similarity). Also stimulates B-cells. Binds to and activates the ILST/gp130 receptor (PubMed:10500198).</text>
</comment>
<comment type="subunit">
    <text evidence="2">Forms a heteromeric complex with cardiotrophin-like cytokine CRLF1/CLF-1; the CRLF1-CLCF1 complex is a ligand for the ciliary neurotrophic factor receptor/CNTFR. The CRLF1-CLCF1 heterodimer binds SORL1 (via N-terminal ectodomain); within this complex, the interaction is mediated predominantly by the CRLF1 moiety. The tripartite signaling complex formed by CRLF1, CLCF1 and CNTFR also binds SORL1.</text>
</comment>
<comment type="interaction">
    <interactant intactId="EBI-3454258">
        <id>Q9QZM3</id>
    </interactant>
    <interactant intactId="EBI-1634131">
        <id>P08226</id>
        <label>Apoe</label>
    </interactant>
    <organismsDiffer>false</organismsDiffer>
    <experiments>2</experiments>
</comment>
<comment type="subcellular location">
    <subcellularLocation>
        <location evidence="1">Secreted</location>
    </subcellularLocation>
</comment>
<comment type="similarity">
    <text evidence="5">Belongs to the IL-6 superfamily.</text>
</comment>
<proteinExistence type="evidence at protein level"/>
<organism>
    <name type="scientific">Mus musculus</name>
    <name type="common">Mouse</name>
    <dbReference type="NCBI Taxonomy" id="10090"/>
    <lineage>
        <taxon>Eukaryota</taxon>
        <taxon>Metazoa</taxon>
        <taxon>Chordata</taxon>
        <taxon>Craniata</taxon>
        <taxon>Vertebrata</taxon>
        <taxon>Euteleostomi</taxon>
        <taxon>Mammalia</taxon>
        <taxon>Eutheria</taxon>
        <taxon>Euarchontoglires</taxon>
        <taxon>Glires</taxon>
        <taxon>Rodentia</taxon>
        <taxon>Myomorpha</taxon>
        <taxon>Muroidea</taxon>
        <taxon>Muridae</taxon>
        <taxon>Murinae</taxon>
        <taxon>Mus</taxon>
        <taxon>Mus</taxon>
    </lineage>
</organism>
<reference key="1">
    <citation type="journal article" date="1999" name="Proc. Natl. Acad. Sci. U.S.A.">
        <title>Novel neurotrophin-1/B cell-stimulating factor-3: a cytokine of the IL-6 family.</title>
        <authorList>
            <person name="Senaldi G."/>
            <person name="Varnum B.C."/>
            <person name="Sarmiento U."/>
            <person name="Starnes C."/>
            <person name="Lile J."/>
            <person name="Scully S."/>
            <person name="Guo J."/>
            <person name="Elliott G."/>
            <person name="McNinch J."/>
            <person name="Shaklee C.L."/>
            <person name="Freeman D."/>
            <person name="Manu F."/>
            <person name="Simonet W.S."/>
            <person name="Boone T."/>
            <person name="Chang M.-S."/>
        </authorList>
    </citation>
    <scope>NUCLEOTIDE SEQUENCE [MRNA]</scope>
    <scope>FUNCTION</scope>
</reference>
<reference key="2">
    <citation type="submission" date="2005-07" db="EMBL/GenBank/DDBJ databases">
        <authorList>
            <person name="Mural R.J."/>
            <person name="Adams M.D."/>
            <person name="Myers E.W."/>
            <person name="Smith H.O."/>
            <person name="Venter J.C."/>
        </authorList>
    </citation>
    <scope>NUCLEOTIDE SEQUENCE [LARGE SCALE GENOMIC DNA]</scope>
</reference>
<reference key="3">
    <citation type="journal article" date="2004" name="Genome Res.">
        <title>The status, quality, and expansion of the NIH full-length cDNA project: the Mammalian Gene Collection (MGC).</title>
        <authorList>
            <consortium name="The MGC Project Team"/>
        </authorList>
    </citation>
    <scope>NUCLEOTIDE SEQUENCE [LARGE SCALE MRNA]</scope>
</reference>